<proteinExistence type="inferred from homology"/>
<dbReference type="EMBL" id="CP000453">
    <property type="protein sequence ID" value="ABI55536.1"/>
    <property type="molecule type" value="Genomic_DNA"/>
</dbReference>
<dbReference type="RefSeq" id="WP_011627932.1">
    <property type="nucleotide sequence ID" value="NC_008340.1"/>
</dbReference>
<dbReference type="SMR" id="Q0ACA1"/>
<dbReference type="KEGG" id="aeh:Mlg_0181"/>
<dbReference type="eggNOG" id="COG0829">
    <property type="taxonomic scope" value="Bacteria"/>
</dbReference>
<dbReference type="HOGENOM" id="CLU_056339_0_0_6"/>
<dbReference type="OrthoDB" id="9798842at2"/>
<dbReference type="Proteomes" id="UP000001962">
    <property type="component" value="Chromosome"/>
</dbReference>
<dbReference type="GO" id="GO:0005737">
    <property type="term" value="C:cytoplasm"/>
    <property type="evidence" value="ECO:0007669"/>
    <property type="project" value="UniProtKB-SubCell"/>
</dbReference>
<dbReference type="GO" id="GO:0016151">
    <property type="term" value="F:nickel cation binding"/>
    <property type="evidence" value="ECO:0007669"/>
    <property type="project" value="UniProtKB-UniRule"/>
</dbReference>
<dbReference type="HAMAP" id="MF_01384">
    <property type="entry name" value="UreD"/>
    <property type="match status" value="1"/>
</dbReference>
<dbReference type="InterPro" id="IPR002669">
    <property type="entry name" value="UreD"/>
</dbReference>
<dbReference type="PANTHER" id="PTHR33643">
    <property type="entry name" value="UREASE ACCESSORY PROTEIN D"/>
    <property type="match status" value="1"/>
</dbReference>
<dbReference type="PANTHER" id="PTHR33643:SF1">
    <property type="entry name" value="UREASE ACCESSORY PROTEIN D"/>
    <property type="match status" value="1"/>
</dbReference>
<dbReference type="Pfam" id="PF01774">
    <property type="entry name" value="UreD"/>
    <property type="match status" value="1"/>
</dbReference>
<reference key="1">
    <citation type="submission" date="2006-08" db="EMBL/GenBank/DDBJ databases">
        <title>Complete sequence of Alkalilimnicola ehrilichei MLHE-1.</title>
        <authorList>
            <person name="Copeland A."/>
            <person name="Lucas S."/>
            <person name="Lapidus A."/>
            <person name="Barry K."/>
            <person name="Detter J.C."/>
            <person name="Glavina del Rio T."/>
            <person name="Hammon N."/>
            <person name="Israni S."/>
            <person name="Dalin E."/>
            <person name="Tice H."/>
            <person name="Pitluck S."/>
            <person name="Sims D."/>
            <person name="Brettin T."/>
            <person name="Bruce D."/>
            <person name="Han C."/>
            <person name="Tapia R."/>
            <person name="Gilna P."/>
            <person name="Schmutz J."/>
            <person name="Larimer F."/>
            <person name="Land M."/>
            <person name="Hauser L."/>
            <person name="Kyrpides N."/>
            <person name="Mikhailova N."/>
            <person name="Oremland R.S."/>
            <person name="Hoeft S.E."/>
            <person name="Switzer-Blum J."/>
            <person name="Kulp T."/>
            <person name="King G."/>
            <person name="Tabita R."/>
            <person name="Witte B."/>
            <person name="Santini J.M."/>
            <person name="Basu P."/>
            <person name="Hollibaugh J.T."/>
            <person name="Xie G."/>
            <person name="Stolz J.F."/>
            <person name="Richardson P."/>
        </authorList>
    </citation>
    <scope>NUCLEOTIDE SEQUENCE [LARGE SCALE GENOMIC DNA]</scope>
    <source>
        <strain>ATCC BAA-1101 / DSM 17681 / MLHE-1</strain>
    </source>
</reference>
<evidence type="ECO:0000255" key="1">
    <source>
        <dbReference type="HAMAP-Rule" id="MF_01384"/>
    </source>
</evidence>
<evidence type="ECO:0000256" key="2">
    <source>
        <dbReference type="SAM" id="MobiDB-lite"/>
    </source>
</evidence>
<gene>
    <name evidence="1" type="primary">ureD</name>
    <name type="ordered locus">Mlg_0181</name>
</gene>
<protein>
    <recommendedName>
        <fullName evidence="1">Urease accessory protein UreD</fullName>
    </recommendedName>
</protein>
<feature type="chain" id="PRO_0000340405" description="Urease accessory protein UreD">
    <location>
        <begin position="1"/>
        <end position="293"/>
    </location>
</feature>
<feature type="region of interest" description="Disordered" evidence="2">
    <location>
        <begin position="1"/>
        <end position="22"/>
    </location>
</feature>
<feature type="compositionally biased region" description="Low complexity" evidence="2">
    <location>
        <begin position="7"/>
        <end position="22"/>
    </location>
</feature>
<keyword id="KW-0143">Chaperone</keyword>
<keyword id="KW-0963">Cytoplasm</keyword>
<keyword id="KW-0996">Nickel insertion</keyword>
<keyword id="KW-1185">Reference proteome</keyword>
<comment type="function">
    <text evidence="1">Required for maturation of urease via the functional incorporation of the urease nickel metallocenter.</text>
</comment>
<comment type="subunit">
    <text evidence="1">UreD, UreF and UreG form a complex that acts as a GTP-hydrolysis-dependent molecular chaperone, activating the urease apoprotein by helping to assemble the nickel containing metallocenter of UreC. The UreE protein probably delivers the nickel.</text>
</comment>
<comment type="subcellular location">
    <subcellularLocation>
        <location evidence="1">Cytoplasm</location>
    </subcellularLocation>
</comment>
<comment type="similarity">
    <text evidence="1">Belongs to the UreD family.</text>
</comment>
<accession>Q0ACA1</accession>
<sequence length="293" mass="31801">MAVAQQAWSPGADPAPSAAPVSPGWRGALRLDFARRGERTALVRRRHQGPLVVQRTFHPEGAPCHAYLLHPPGGLVGGDELDLSVEVGEGAHALMTTPGAAKFYRSSGDWSIQRQVFRLAPGATFEWLPMETILHGGSRSRLINRFELAEGARLIAWEMVALGRPGSGDHFPRGVLDQRLAVNCEQMPLLRERLSLNADDPLRTAPWGLQGQAVFATLLASPAPDGLEHDLRDALQVPPGVRMGATRCPEGLLAVRVLGPGVEPVRKTLEQAWRTIREPVVGLPPCPPRIWST</sequence>
<organism>
    <name type="scientific">Alkalilimnicola ehrlichii (strain ATCC BAA-1101 / DSM 17681 / MLHE-1)</name>
    <dbReference type="NCBI Taxonomy" id="187272"/>
    <lineage>
        <taxon>Bacteria</taxon>
        <taxon>Pseudomonadati</taxon>
        <taxon>Pseudomonadota</taxon>
        <taxon>Gammaproteobacteria</taxon>
        <taxon>Chromatiales</taxon>
        <taxon>Ectothiorhodospiraceae</taxon>
        <taxon>Alkalilimnicola</taxon>
    </lineage>
</organism>
<name>URED_ALKEH</name>